<keyword id="KW-0342">GTP-binding</keyword>
<keyword id="KW-0378">Hydrolase</keyword>
<keyword id="KW-0456">Lyase</keyword>
<keyword id="KW-0460">Magnesium</keyword>
<keyword id="KW-0464">Manganese</keyword>
<keyword id="KW-0479">Metal-binding</keyword>
<keyword id="KW-0511">Multifunctional enzyme</keyword>
<keyword id="KW-0547">Nucleotide-binding</keyword>
<keyword id="KW-0686">Riboflavin biosynthesis</keyword>
<keyword id="KW-0862">Zinc</keyword>
<proteinExistence type="inferred from homology"/>
<sequence>MFHRIEEALEDLKQGKVVIVCDDENRENEGDFIALAEYITPETINFMITHGRGLVCVPITEGYAERLQLEPMVSHNTDSHHTAFTVSIDHVSTTTGISAHERATTIQQLLNPASKGADFNRPGHIFPLIAKEGGVLRRAGHTEAAVDLAQLCGAEPAGVICEIINEDGTMARVPDLLQCAKQFDIKMITIEDLIAYRRHHETLVTREVEITLPTDFGTFQAIGYSNSLDTKEHIALVKGDISTGEPVLVRVHSECLTGDVFGSCRCDCGPQLHAALAQIEREGKGVLLYMRQEGRGIGLLNKLRAYKLQEEGFDTVEANEKLGFPADLRDYGIGAQILKDLGLQHLRLLTNNPRKIAGLQGYDLTVTERVPLQMPAKEENKTYLQTKVNKLGHLLNL</sequence>
<name>RIBBA_BACAC</name>
<organism>
    <name type="scientific">Bacillus anthracis (strain CDC 684 / NRRL 3495)</name>
    <dbReference type="NCBI Taxonomy" id="568206"/>
    <lineage>
        <taxon>Bacteria</taxon>
        <taxon>Bacillati</taxon>
        <taxon>Bacillota</taxon>
        <taxon>Bacilli</taxon>
        <taxon>Bacillales</taxon>
        <taxon>Bacillaceae</taxon>
        <taxon>Bacillus</taxon>
        <taxon>Bacillus cereus group</taxon>
    </lineage>
</organism>
<accession>C3LIX7</accession>
<reference key="1">
    <citation type="submission" date="2008-10" db="EMBL/GenBank/DDBJ databases">
        <title>Genome sequence of Bacillus anthracis str. CDC 684.</title>
        <authorList>
            <person name="Dodson R.J."/>
            <person name="Munk A.C."/>
            <person name="Brettin T."/>
            <person name="Bruce D."/>
            <person name="Detter C."/>
            <person name="Tapia R."/>
            <person name="Han C."/>
            <person name="Sutton G."/>
            <person name="Sims D."/>
        </authorList>
    </citation>
    <scope>NUCLEOTIDE SEQUENCE [LARGE SCALE GENOMIC DNA]</scope>
    <source>
        <strain>CDC 684 / NRRL 3495</strain>
    </source>
</reference>
<protein>
    <recommendedName>
        <fullName evidence="1">Riboflavin biosynthesis protein RibBA</fullName>
    </recommendedName>
    <domain>
        <recommendedName>
            <fullName evidence="1">3,4-dihydroxy-2-butanone 4-phosphate synthase</fullName>
            <shortName evidence="1">DHBP synthase</shortName>
            <ecNumber evidence="1">4.1.99.12</ecNumber>
        </recommendedName>
    </domain>
    <domain>
        <recommendedName>
            <fullName evidence="1">GTP cyclohydrolase-2</fullName>
            <ecNumber evidence="1">3.5.4.25</ecNumber>
        </recommendedName>
        <alternativeName>
            <fullName evidence="1">GTP cyclohydrolase II</fullName>
        </alternativeName>
    </domain>
</protein>
<evidence type="ECO:0000255" key="1">
    <source>
        <dbReference type="HAMAP-Rule" id="MF_01283"/>
    </source>
</evidence>
<dbReference type="EC" id="4.1.99.12" evidence="1"/>
<dbReference type="EC" id="3.5.4.25" evidence="1"/>
<dbReference type="EMBL" id="CP001215">
    <property type="protein sequence ID" value="ACP16433.1"/>
    <property type="molecule type" value="Genomic_DNA"/>
</dbReference>
<dbReference type="RefSeq" id="WP_000469013.1">
    <property type="nucleotide sequence ID" value="NC_012581.1"/>
</dbReference>
<dbReference type="SMR" id="C3LIX7"/>
<dbReference type="GeneID" id="45024000"/>
<dbReference type="KEGG" id="bah:BAMEG_4373"/>
<dbReference type="HOGENOM" id="CLU_020273_1_2_9"/>
<dbReference type="UniPathway" id="UPA00275">
    <property type="reaction ID" value="UER00399"/>
</dbReference>
<dbReference type="UniPathway" id="UPA00275">
    <property type="reaction ID" value="UER00400"/>
</dbReference>
<dbReference type="GO" id="GO:0005829">
    <property type="term" value="C:cytosol"/>
    <property type="evidence" value="ECO:0007669"/>
    <property type="project" value="TreeGrafter"/>
</dbReference>
<dbReference type="GO" id="GO:0008686">
    <property type="term" value="F:3,4-dihydroxy-2-butanone-4-phosphate synthase activity"/>
    <property type="evidence" value="ECO:0007669"/>
    <property type="project" value="UniProtKB-UniRule"/>
</dbReference>
<dbReference type="GO" id="GO:0005525">
    <property type="term" value="F:GTP binding"/>
    <property type="evidence" value="ECO:0007669"/>
    <property type="project" value="UniProtKB-KW"/>
</dbReference>
<dbReference type="GO" id="GO:0003935">
    <property type="term" value="F:GTP cyclohydrolase II activity"/>
    <property type="evidence" value="ECO:0007669"/>
    <property type="project" value="UniProtKB-UniRule"/>
</dbReference>
<dbReference type="GO" id="GO:0000287">
    <property type="term" value="F:magnesium ion binding"/>
    <property type="evidence" value="ECO:0007669"/>
    <property type="project" value="UniProtKB-UniRule"/>
</dbReference>
<dbReference type="GO" id="GO:0030145">
    <property type="term" value="F:manganese ion binding"/>
    <property type="evidence" value="ECO:0007669"/>
    <property type="project" value="UniProtKB-UniRule"/>
</dbReference>
<dbReference type="GO" id="GO:0008270">
    <property type="term" value="F:zinc ion binding"/>
    <property type="evidence" value="ECO:0007669"/>
    <property type="project" value="UniProtKB-UniRule"/>
</dbReference>
<dbReference type="GO" id="GO:0009231">
    <property type="term" value="P:riboflavin biosynthetic process"/>
    <property type="evidence" value="ECO:0007669"/>
    <property type="project" value="UniProtKB-UniRule"/>
</dbReference>
<dbReference type="CDD" id="cd00641">
    <property type="entry name" value="GTP_cyclohydro2"/>
    <property type="match status" value="1"/>
</dbReference>
<dbReference type="FunFam" id="3.40.50.10990:FF:000001">
    <property type="entry name" value="Riboflavin biosynthesis protein RibBA"/>
    <property type="match status" value="1"/>
</dbReference>
<dbReference type="FunFam" id="3.90.870.10:FF:000001">
    <property type="entry name" value="Riboflavin biosynthesis protein RibBA"/>
    <property type="match status" value="1"/>
</dbReference>
<dbReference type="Gene3D" id="3.90.870.10">
    <property type="entry name" value="DHBP synthase"/>
    <property type="match status" value="1"/>
</dbReference>
<dbReference type="Gene3D" id="3.40.50.10990">
    <property type="entry name" value="GTP cyclohydrolase II"/>
    <property type="match status" value="1"/>
</dbReference>
<dbReference type="HAMAP" id="MF_00179">
    <property type="entry name" value="RibA"/>
    <property type="match status" value="1"/>
</dbReference>
<dbReference type="HAMAP" id="MF_00180">
    <property type="entry name" value="RibB"/>
    <property type="match status" value="1"/>
</dbReference>
<dbReference type="HAMAP" id="MF_01283">
    <property type="entry name" value="RibBA"/>
    <property type="match status" value="1"/>
</dbReference>
<dbReference type="InterPro" id="IPR017945">
    <property type="entry name" value="DHBP_synth_RibB-like_a/b_dom"/>
</dbReference>
<dbReference type="InterPro" id="IPR000422">
    <property type="entry name" value="DHBP_synthase_RibB"/>
</dbReference>
<dbReference type="InterPro" id="IPR032677">
    <property type="entry name" value="GTP_cyclohydro_II"/>
</dbReference>
<dbReference type="InterPro" id="IPR000926">
    <property type="entry name" value="RibA"/>
</dbReference>
<dbReference type="InterPro" id="IPR036144">
    <property type="entry name" value="RibA-like_sf"/>
</dbReference>
<dbReference type="InterPro" id="IPR016299">
    <property type="entry name" value="Riboflavin_synth_RibBA"/>
</dbReference>
<dbReference type="NCBIfam" id="NF001591">
    <property type="entry name" value="PRK00393.1"/>
    <property type="match status" value="1"/>
</dbReference>
<dbReference type="NCBIfam" id="NF006803">
    <property type="entry name" value="PRK09311.1"/>
    <property type="match status" value="1"/>
</dbReference>
<dbReference type="NCBIfam" id="TIGR00505">
    <property type="entry name" value="ribA"/>
    <property type="match status" value="1"/>
</dbReference>
<dbReference type="NCBIfam" id="TIGR00506">
    <property type="entry name" value="ribB"/>
    <property type="match status" value="1"/>
</dbReference>
<dbReference type="PANTHER" id="PTHR21327:SF18">
    <property type="entry name" value="3,4-DIHYDROXY-2-BUTANONE 4-PHOSPHATE SYNTHASE"/>
    <property type="match status" value="1"/>
</dbReference>
<dbReference type="PANTHER" id="PTHR21327">
    <property type="entry name" value="GTP CYCLOHYDROLASE II-RELATED"/>
    <property type="match status" value="1"/>
</dbReference>
<dbReference type="Pfam" id="PF00926">
    <property type="entry name" value="DHBP_synthase"/>
    <property type="match status" value="1"/>
</dbReference>
<dbReference type="Pfam" id="PF00925">
    <property type="entry name" value="GTP_cyclohydro2"/>
    <property type="match status" value="1"/>
</dbReference>
<dbReference type="PIRSF" id="PIRSF001259">
    <property type="entry name" value="RibA"/>
    <property type="match status" value="1"/>
</dbReference>
<dbReference type="SUPFAM" id="SSF142695">
    <property type="entry name" value="RibA-like"/>
    <property type="match status" value="1"/>
</dbReference>
<dbReference type="SUPFAM" id="SSF55821">
    <property type="entry name" value="YrdC/RibB"/>
    <property type="match status" value="1"/>
</dbReference>
<feature type="chain" id="PRO_1000165243" description="Riboflavin biosynthesis protein RibBA">
    <location>
        <begin position="1"/>
        <end position="397"/>
    </location>
</feature>
<feature type="region of interest" description="DHBP synthase">
    <location>
        <begin position="1"/>
        <end position="199"/>
    </location>
</feature>
<feature type="region of interest" description="GTP cyclohydrolase II">
    <location>
        <begin position="200"/>
        <end position="397"/>
    </location>
</feature>
<feature type="active site" description="Proton acceptor; for GTP cyclohydrolase activity" evidence="1">
    <location>
        <position position="327"/>
    </location>
</feature>
<feature type="active site" description="Nucleophile; for GTP cyclohydrolase activity" evidence="1">
    <location>
        <position position="329"/>
    </location>
</feature>
<feature type="binding site" evidence="1">
    <location>
        <begin position="26"/>
        <end position="27"/>
    </location>
    <ligand>
        <name>D-ribulose 5-phosphate</name>
        <dbReference type="ChEBI" id="CHEBI:58121"/>
    </ligand>
</feature>
<feature type="binding site" evidence="1">
    <location>
        <position position="27"/>
    </location>
    <ligand>
        <name>Mg(2+)</name>
        <dbReference type="ChEBI" id="CHEBI:18420"/>
        <label>1</label>
    </ligand>
</feature>
<feature type="binding site" evidence="1">
    <location>
        <position position="27"/>
    </location>
    <ligand>
        <name>Mg(2+)</name>
        <dbReference type="ChEBI" id="CHEBI:18420"/>
        <label>2</label>
    </ligand>
</feature>
<feature type="binding site" evidence="1">
    <location>
        <position position="31"/>
    </location>
    <ligand>
        <name>D-ribulose 5-phosphate</name>
        <dbReference type="ChEBI" id="CHEBI:58121"/>
    </ligand>
</feature>
<feature type="binding site" evidence="1">
    <location>
        <begin position="138"/>
        <end position="142"/>
    </location>
    <ligand>
        <name>D-ribulose 5-phosphate</name>
        <dbReference type="ChEBI" id="CHEBI:58121"/>
    </ligand>
</feature>
<feature type="binding site" evidence="1">
    <location>
        <position position="141"/>
    </location>
    <ligand>
        <name>Mg(2+)</name>
        <dbReference type="ChEBI" id="CHEBI:18420"/>
        <label>2</label>
    </ligand>
</feature>
<feature type="binding site" evidence="1">
    <location>
        <position position="162"/>
    </location>
    <ligand>
        <name>D-ribulose 5-phosphate</name>
        <dbReference type="ChEBI" id="CHEBI:58121"/>
    </ligand>
</feature>
<feature type="binding site" evidence="1">
    <location>
        <begin position="250"/>
        <end position="254"/>
    </location>
    <ligand>
        <name>GTP</name>
        <dbReference type="ChEBI" id="CHEBI:37565"/>
    </ligand>
</feature>
<feature type="binding site" evidence="1">
    <location>
        <position position="255"/>
    </location>
    <ligand>
        <name>Zn(2+)</name>
        <dbReference type="ChEBI" id="CHEBI:29105"/>
        <note>catalytic</note>
    </ligand>
</feature>
<feature type="binding site" evidence="1">
    <location>
        <position position="266"/>
    </location>
    <ligand>
        <name>Zn(2+)</name>
        <dbReference type="ChEBI" id="CHEBI:29105"/>
        <note>catalytic</note>
    </ligand>
</feature>
<feature type="binding site" evidence="1">
    <location>
        <position position="268"/>
    </location>
    <ligand>
        <name>Zn(2+)</name>
        <dbReference type="ChEBI" id="CHEBI:29105"/>
        <note>catalytic</note>
    </ligand>
</feature>
<feature type="binding site" evidence="1">
    <location>
        <position position="271"/>
    </location>
    <ligand>
        <name>GTP</name>
        <dbReference type="ChEBI" id="CHEBI:37565"/>
    </ligand>
</feature>
<feature type="binding site" evidence="1">
    <location>
        <begin position="293"/>
        <end position="295"/>
    </location>
    <ligand>
        <name>GTP</name>
        <dbReference type="ChEBI" id="CHEBI:37565"/>
    </ligand>
</feature>
<feature type="binding site" evidence="1">
    <location>
        <position position="315"/>
    </location>
    <ligand>
        <name>GTP</name>
        <dbReference type="ChEBI" id="CHEBI:37565"/>
    </ligand>
</feature>
<feature type="binding site" evidence="1">
    <location>
        <position position="350"/>
    </location>
    <ligand>
        <name>GTP</name>
        <dbReference type="ChEBI" id="CHEBI:37565"/>
    </ligand>
</feature>
<feature type="binding site" evidence="1">
    <location>
        <position position="355"/>
    </location>
    <ligand>
        <name>GTP</name>
        <dbReference type="ChEBI" id="CHEBI:37565"/>
    </ligand>
</feature>
<feature type="site" description="Essential for DHBP synthase activity" evidence="1">
    <location>
        <position position="124"/>
    </location>
</feature>
<feature type="site" description="Essential for DHBP synthase activity" evidence="1">
    <location>
        <position position="162"/>
    </location>
</feature>
<gene>
    <name evidence="1" type="primary">ribBA</name>
    <name type="ordered locus">BAMEG_4373</name>
</gene>
<comment type="function">
    <text evidence="1">Catalyzes the conversion of D-ribulose 5-phosphate to formate and 3,4-dihydroxy-2-butanone 4-phosphate.</text>
</comment>
<comment type="function">
    <text evidence="1">Catalyzes the conversion of GTP to 2,5-diamino-6-ribosylamino-4(3H)-pyrimidinone 5'-phosphate (DARP), formate and pyrophosphate.</text>
</comment>
<comment type="catalytic activity">
    <reaction evidence="1">
        <text>D-ribulose 5-phosphate = (2S)-2-hydroxy-3-oxobutyl phosphate + formate + H(+)</text>
        <dbReference type="Rhea" id="RHEA:18457"/>
        <dbReference type="ChEBI" id="CHEBI:15378"/>
        <dbReference type="ChEBI" id="CHEBI:15740"/>
        <dbReference type="ChEBI" id="CHEBI:58121"/>
        <dbReference type="ChEBI" id="CHEBI:58830"/>
        <dbReference type="EC" id="4.1.99.12"/>
    </reaction>
</comment>
<comment type="catalytic activity">
    <reaction evidence="1">
        <text>GTP + 4 H2O = 2,5-diamino-6-hydroxy-4-(5-phosphoribosylamino)-pyrimidine + formate + 2 phosphate + 3 H(+)</text>
        <dbReference type="Rhea" id="RHEA:23704"/>
        <dbReference type="ChEBI" id="CHEBI:15377"/>
        <dbReference type="ChEBI" id="CHEBI:15378"/>
        <dbReference type="ChEBI" id="CHEBI:15740"/>
        <dbReference type="ChEBI" id="CHEBI:37565"/>
        <dbReference type="ChEBI" id="CHEBI:43474"/>
        <dbReference type="ChEBI" id="CHEBI:58614"/>
        <dbReference type="EC" id="3.5.4.25"/>
    </reaction>
</comment>
<comment type="cofactor">
    <cofactor evidence="1">
        <name>Mg(2+)</name>
        <dbReference type="ChEBI" id="CHEBI:18420"/>
    </cofactor>
    <cofactor evidence="1">
        <name>Mn(2+)</name>
        <dbReference type="ChEBI" id="CHEBI:29035"/>
    </cofactor>
    <text evidence="1">Binds 2 divalent metal cations per subunit. Magnesium or manganese.</text>
</comment>
<comment type="cofactor">
    <cofactor evidence="1">
        <name>Zn(2+)</name>
        <dbReference type="ChEBI" id="CHEBI:29105"/>
    </cofactor>
    <text evidence="1">Binds 1 zinc ion per subunit.</text>
</comment>
<comment type="pathway">
    <text evidence="1">Cofactor biosynthesis; riboflavin biosynthesis; 2-hydroxy-3-oxobutyl phosphate from D-ribulose 5-phosphate: step 1/1.</text>
</comment>
<comment type="pathway">
    <text evidence="1">Cofactor biosynthesis; riboflavin biosynthesis; 5-amino-6-(D-ribitylamino)uracil from GTP: step 1/4.</text>
</comment>
<comment type="similarity">
    <text evidence="1">In the N-terminal section; belongs to the DHBP synthase family.</text>
</comment>
<comment type="similarity">
    <text evidence="1">In the C-terminal section; belongs to the GTP cyclohydrolase II family.</text>
</comment>